<name>T191C_HUMAN</name>
<reference key="1">
    <citation type="journal article" date="1999" name="Nature">
        <title>The DNA sequence of human chromosome 22.</title>
        <authorList>
            <person name="Dunham I."/>
            <person name="Hunt A.R."/>
            <person name="Collins J.E."/>
            <person name="Bruskiewich R."/>
            <person name="Beare D.M."/>
            <person name="Clamp M."/>
            <person name="Smink L.J."/>
            <person name="Ainscough R."/>
            <person name="Almeida J.P."/>
            <person name="Babbage A.K."/>
            <person name="Bagguley C."/>
            <person name="Bailey J."/>
            <person name="Barlow K.F."/>
            <person name="Bates K.N."/>
            <person name="Beasley O.P."/>
            <person name="Bird C.P."/>
            <person name="Blakey S.E."/>
            <person name="Bridgeman A.M."/>
            <person name="Buck D."/>
            <person name="Burgess J."/>
            <person name="Burrill W.D."/>
            <person name="Burton J."/>
            <person name="Carder C."/>
            <person name="Carter N.P."/>
            <person name="Chen Y."/>
            <person name="Clark G."/>
            <person name="Clegg S.M."/>
            <person name="Cobley V.E."/>
            <person name="Cole C.G."/>
            <person name="Collier R.E."/>
            <person name="Connor R."/>
            <person name="Conroy D."/>
            <person name="Corby N.R."/>
            <person name="Coville G.J."/>
            <person name="Cox A.V."/>
            <person name="Davis J."/>
            <person name="Dawson E."/>
            <person name="Dhami P.D."/>
            <person name="Dockree C."/>
            <person name="Dodsworth S.J."/>
            <person name="Durbin R.M."/>
            <person name="Ellington A.G."/>
            <person name="Evans K.L."/>
            <person name="Fey J.M."/>
            <person name="Fleming K."/>
            <person name="French L."/>
            <person name="Garner A.A."/>
            <person name="Gilbert J.G.R."/>
            <person name="Goward M.E."/>
            <person name="Grafham D.V."/>
            <person name="Griffiths M.N.D."/>
            <person name="Hall C."/>
            <person name="Hall R.E."/>
            <person name="Hall-Tamlyn G."/>
            <person name="Heathcott R.W."/>
            <person name="Ho S."/>
            <person name="Holmes S."/>
            <person name="Hunt S.E."/>
            <person name="Jones M.C."/>
            <person name="Kershaw J."/>
            <person name="Kimberley A.M."/>
            <person name="King A."/>
            <person name="Laird G.K."/>
            <person name="Langford C.F."/>
            <person name="Leversha M.A."/>
            <person name="Lloyd C."/>
            <person name="Lloyd D.M."/>
            <person name="Martyn I.D."/>
            <person name="Mashreghi-Mohammadi M."/>
            <person name="Matthews L.H."/>
            <person name="Mccann O.T."/>
            <person name="Mcclay J."/>
            <person name="Mclaren S."/>
            <person name="McMurray A.A."/>
            <person name="Milne S.A."/>
            <person name="Mortimore B.J."/>
            <person name="Odell C.N."/>
            <person name="Pavitt R."/>
            <person name="Pearce A.V."/>
            <person name="Pearson D."/>
            <person name="Phillimore B.J.C.T."/>
            <person name="Phillips S.H."/>
            <person name="Plumb R.W."/>
            <person name="Ramsay H."/>
            <person name="Ramsey Y."/>
            <person name="Rogers L."/>
            <person name="Ross M.T."/>
            <person name="Scott C.E."/>
            <person name="Sehra H.K."/>
            <person name="Skuce C.D."/>
            <person name="Smalley S."/>
            <person name="Smith M.L."/>
            <person name="Soderlund C."/>
            <person name="Spragon L."/>
            <person name="Steward C.A."/>
            <person name="Sulston J.E."/>
            <person name="Swann R.M."/>
            <person name="Vaudin M."/>
            <person name="Wall M."/>
            <person name="Wallis J.M."/>
            <person name="Whiteley M.N."/>
            <person name="Willey D.L."/>
            <person name="Williams L."/>
            <person name="Williams S.A."/>
            <person name="Williamson H."/>
            <person name="Wilmer T.E."/>
            <person name="Wilming L."/>
            <person name="Wright C.L."/>
            <person name="Hubbard T."/>
            <person name="Bentley D.R."/>
            <person name="Beck S."/>
            <person name="Rogers J."/>
            <person name="Shimizu N."/>
            <person name="Minoshima S."/>
            <person name="Kawasaki K."/>
            <person name="Sasaki T."/>
            <person name="Asakawa S."/>
            <person name="Kudoh J."/>
            <person name="Shintani A."/>
            <person name="Shibuya K."/>
            <person name="Yoshizaki Y."/>
            <person name="Aoki N."/>
            <person name="Mitsuyama S."/>
            <person name="Roe B.A."/>
            <person name="Chen F."/>
            <person name="Chu L."/>
            <person name="Crabtree J."/>
            <person name="Deschamps S."/>
            <person name="Do A."/>
            <person name="Do T."/>
            <person name="Dorman A."/>
            <person name="Fang F."/>
            <person name="Fu Y."/>
            <person name="Hu P."/>
            <person name="Hua A."/>
            <person name="Kenton S."/>
            <person name="Lai H."/>
            <person name="Lao H.I."/>
            <person name="Lewis J."/>
            <person name="Lewis S."/>
            <person name="Lin S.-P."/>
            <person name="Loh P."/>
            <person name="Malaj E."/>
            <person name="Nguyen T."/>
            <person name="Pan H."/>
            <person name="Phan S."/>
            <person name="Qi S."/>
            <person name="Qian Y."/>
            <person name="Ray L."/>
            <person name="Ren Q."/>
            <person name="Shaull S."/>
            <person name="Sloan D."/>
            <person name="Song L."/>
            <person name="Wang Q."/>
            <person name="Wang Y."/>
            <person name="Wang Z."/>
            <person name="White J."/>
            <person name="Willingham D."/>
            <person name="Wu H."/>
            <person name="Yao Z."/>
            <person name="Zhan M."/>
            <person name="Zhang G."/>
            <person name="Chissoe S."/>
            <person name="Murray J."/>
            <person name="Miller N."/>
            <person name="Minx P."/>
            <person name="Fulton R."/>
            <person name="Johnson D."/>
            <person name="Bemis G."/>
            <person name="Bentley D."/>
            <person name="Bradshaw H."/>
            <person name="Bourne S."/>
            <person name="Cordes M."/>
            <person name="Du Z."/>
            <person name="Fulton L."/>
            <person name="Goela D."/>
            <person name="Graves T."/>
            <person name="Hawkins J."/>
            <person name="Hinds K."/>
            <person name="Kemp K."/>
            <person name="Latreille P."/>
            <person name="Layman D."/>
            <person name="Ozersky P."/>
            <person name="Rohlfing T."/>
            <person name="Scheet P."/>
            <person name="Walker C."/>
            <person name="Wamsley A."/>
            <person name="Wohldmann P."/>
            <person name="Pepin K."/>
            <person name="Nelson J."/>
            <person name="Korf I."/>
            <person name="Bedell J.A."/>
            <person name="Hillier L.W."/>
            <person name="Mardis E."/>
            <person name="Waterston R."/>
            <person name="Wilson R."/>
            <person name="Emanuel B.S."/>
            <person name="Shaikh T."/>
            <person name="Kurahashi H."/>
            <person name="Saitta S."/>
            <person name="Budarf M.L."/>
            <person name="McDermid H.E."/>
            <person name="Johnson A."/>
            <person name="Wong A.C.C."/>
            <person name="Morrow B.E."/>
            <person name="Edelmann L."/>
            <person name="Kim U.J."/>
            <person name="Shizuya H."/>
            <person name="Simon M.I."/>
            <person name="Dumanski J.P."/>
            <person name="Peyrard M."/>
            <person name="Kedra D."/>
            <person name="Seroussi E."/>
            <person name="Fransson I."/>
            <person name="Tapia I."/>
            <person name="Bruder C.E."/>
            <person name="O'Brien K.P."/>
            <person name="Wilkinson P."/>
            <person name="Bodenteich A."/>
            <person name="Hartman K."/>
            <person name="Hu X."/>
            <person name="Khan A.S."/>
            <person name="Lane L."/>
            <person name="Tilahun Y."/>
            <person name="Wright H."/>
        </authorList>
    </citation>
    <scope>NUCLEOTIDE SEQUENCE [LARGE SCALE GENOMIC DNA] (ISOFORMS 1 AND 2)</scope>
</reference>
<keyword id="KW-0025">Alternative splicing</keyword>
<keyword id="KW-0175">Coiled coil</keyword>
<keyword id="KW-0472">Membrane</keyword>
<keyword id="KW-1267">Proteomics identification</keyword>
<keyword id="KW-1185">Reference proteome</keyword>
<keyword id="KW-0812">Transmembrane</keyword>
<keyword id="KW-1133">Transmembrane helix</keyword>
<organism>
    <name type="scientific">Homo sapiens</name>
    <name type="common">Human</name>
    <dbReference type="NCBI Taxonomy" id="9606"/>
    <lineage>
        <taxon>Eukaryota</taxon>
        <taxon>Metazoa</taxon>
        <taxon>Chordata</taxon>
        <taxon>Craniata</taxon>
        <taxon>Vertebrata</taxon>
        <taxon>Euteleostomi</taxon>
        <taxon>Mammalia</taxon>
        <taxon>Eutheria</taxon>
        <taxon>Euarchontoglires</taxon>
        <taxon>Primates</taxon>
        <taxon>Haplorrhini</taxon>
        <taxon>Catarrhini</taxon>
        <taxon>Hominidae</taxon>
        <taxon>Homo</taxon>
    </lineage>
</organism>
<gene>
    <name evidence="4" type="primary">TMEM191C</name>
</gene>
<accession>A6NGB0</accession>
<accession>A0A1B0GW53</accession>
<protein>
    <recommendedName>
        <fullName evidence="4">Transmembrane protein 191C</fullName>
    </recommendedName>
</protein>
<dbReference type="EMBL" id="AP000557">
    <property type="status" value="NOT_ANNOTATED_CDS"/>
    <property type="molecule type" value="Genomic_DNA"/>
</dbReference>
<dbReference type="CCDS" id="CCDS82695.2">
    <molecule id="A6NGB0-1"/>
</dbReference>
<dbReference type="CCDS" id="CCDS93125.1">
    <molecule id="A6NGB0-2"/>
</dbReference>
<dbReference type="RefSeq" id="NP_001193981.2">
    <molecule id="A6NGB0-1"/>
    <property type="nucleotide sequence ID" value="NM_001207052.2"/>
</dbReference>
<dbReference type="RefSeq" id="NP_001375283.1">
    <molecule id="A6NGB0-2"/>
    <property type="nucleotide sequence ID" value="NM_001388354.1"/>
</dbReference>
<dbReference type="SMR" id="A6NGB0"/>
<dbReference type="STRING" id="9606.ENSP00000489706"/>
<dbReference type="PhosphoSitePlus" id="A6NGB0"/>
<dbReference type="BioMuta" id="TMEM191C"/>
<dbReference type="MassIVE" id="A6NGB0"/>
<dbReference type="PeptideAtlas" id="A6NGB0"/>
<dbReference type="ProteomicsDB" id="1113"/>
<dbReference type="Antibodypedia" id="82410">
    <property type="antibodies" value="1 antibodies from 1 providers"/>
</dbReference>
<dbReference type="DNASU" id="645426"/>
<dbReference type="Ensembl" id="ENST00000536718.3">
    <molecule id="A6NGB0-2"/>
    <property type="protein sequence ID" value="ENSP00000490781.2"/>
    <property type="gene ID" value="ENSG00000206140.12"/>
</dbReference>
<dbReference type="Ensembl" id="ENST00000621561.5">
    <molecule id="A6NGB0-1"/>
    <property type="protein sequence ID" value="ENSP00000489706.2"/>
    <property type="gene ID" value="ENSG00000206140.12"/>
</dbReference>
<dbReference type="GeneID" id="645426"/>
<dbReference type="MANE-Select" id="ENST00000536718.3">
    <property type="protein sequence ID" value="ENSP00000490781.2"/>
    <property type="RefSeq nucleotide sequence ID" value="NM_001388354.1"/>
    <property type="RefSeq protein sequence ID" value="NP_001375283.1"/>
</dbReference>
<dbReference type="UCSC" id="uc062bjc.1">
    <molecule id="A6NGB0-2"/>
    <property type="organism name" value="human"/>
</dbReference>
<dbReference type="AGR" id="HGNC:33601"/>
<dbReference type="GeneCards" id="TMEM191C"/>
<dbReference type="HGNC" id="HGNC:33601">
    <property type="gene designation" value="TMEM191C"/>
</dbReference>
<dbReference type="HPA" id="ENSG00000206140">
    <property type="expression patterns" value="Tissue enriched (testis)"/>
</dbReference>
<dbReference type="neXtProt" id="NX_A6NGB0"/>
<dbReference type="OpenTargets" id="ENSG00000206140"/>
<dbReference type="VEuPathDB" id="HostDB:ENSG00000206140"/>
<dbReference type="GeneTree" id="ENSGT00390000009363"/>
<dbReference type="InParanoid" id="A6NGB0"/>
<dbReference type="OrthoDB" id="9631427at2759"/>
<dbReference type="PAN-GO" id="A6NGB0">
    <property type="GO annotations" value="0 GO annotations based on evolutionary models"/>
</dbReference>
<dbReference type="SignaLink" id="A6NGB0"/>
<dbReference type="BioGRID-ORCS" id="645426">
    <property type="hits" value="8 hits in 239 CRISPR screens"/>
</dbReference>
<dbReference type="ChiTaRS" id="TMEM191C">
    <property type="organism name" value="human"/>
</dbReference>
<dbReference type="Pharos" id="A6NGB0">
    <property type="development level" value="Tdark"/>
</dbReference>
<dbReference type="PRO" id="PR:A6NGB0"/>
<dbReference type="Proteomes" id="UP000005640">
    <property type="component" value="Chromosome 22"/>
</dbReference>
<dbReference type="RNAct" id="A6NGB0">
    <property type="molecule type" value="protein"/>
</dbReference>
<dbReference type="Bgee" id="ENSG00000206140">
    <property type="expression patterns" value="Expressed in right testis and 93 other cell types or tissues"/>
</dbReference>
<dbReference type="ExpressionAtlas" id="A6NGB0">
    <property type="expression patterns" value="baseline and differential"/>
</dbReference>
<dbReference type="GO" id="GO:0016020">
    <property type="term" value="C:membrane"/>
    <property type="evidence" value="ECO:0007669"/>
    <property type="project" value="UniProtKB-SubCell"/>
</dbReference>
<dbReference type="InterPro" id="IPR026617">
    <property type="entry name" value="SMCO2/5"/>
</dbReference>
<dbReference type="InterPro" id="IPR028186">
    <property type="entry name" value="TMEM191B/C"/>
</dbReference>
<dbReference type="PANTHER" id="PTHR38498">
    <property type="entry name" value="TRANSMEMBRANE PROTEIN 191B-RELATED"/>
    <property type="match status" value="1"/>
</dbReference>
<dbReference type="PANTHER" id="PTHR38498:SF1">
    <property type="entry name" value="TRANSMEMBRANE PROTEIN 191B-RELATED"/>
    <property type="match status" value="1"/>
</dbReference>
<dbReference type="Pfam" id="PF14992">
    <property type="entry name" value="TMCO5"/>
    <property type="match status" value="1"/>
</dbReference>
<dbReference type="Pfam" id="PF15194">
    <property type="entry name" value="TMEM191C"/>
    <property type="match status" value="1"/>
</dbReference>
<comment type="subcellular location">
    <subcellularLocation>
        <location evidence="1">Membrane</location>
        <topology evidence="1">Single-pass membrane protein</topology>
    </subcellularLocation>
</comment>
<comment type="alternative products">
    <event type="alternative splicing"/>
    <isoform>
        <id>A6NGB0-2</id>
        <name>2</name>
        <sequence type="displayed"/>
    </isoform>
    <isoform>
        <id>A6NGB0-1</id>
        <name>1</name>
        <sequence type="described" ref="VSP_062202"/>
    </isoform>
</comment>
<comment type="similarity">
    <text evidence="3">Belongs to the TMEM191 family.</text>
</comment>
<feature type="chain" id="PRO_0000340717" description="Transmembrane protein 191C">
    <location>
        <begin position="1"/>
        <end position="302"/>
    </location>
</feature>
<feature type="transmembrane region" description="Helical" evidence="1">
    <location>
        <begin position="238"/>
        <end position="258"/>
    </location>
</feature>
<feature type="region of interest" description="Disordered" evidence="2">
    <location>
        <begin position="1"/>
        <end position="21"/>
    </location>
</feature>
<feature type="region of interest" description="Disordered" evidence="2">
    <location>
        <begin position="54"/>
        <end position="73"/>
    </location>
</feature>
<feature type="coiled-coil region" evidence="1">
    <location>
        <begin position="5"/>
        <end position="160"/>
    </location>
</feature>
<feature type="splice variant" id="VSP_062202" description="In isoform 1.">
    <original>EVQVKVMEAAEELDAWQSGREL</original>
    <variation>VRPHSDAKVPPASPPPDLGR</variation>
    <location>
        <begin position="176"/>
        <end position="197"/>
    </location>
</feature>
<evidence type="ECO:0000255" key="1"/>
<evidence type="ECO:0000256" key="2">
    <source>
        <dbReference type="SAM" id="MobiDB-lite"/>
    </source>
</evidence>
<evidence type="ECO:0000305" key="3"/>
<evidence type="ECO:0000312" key="4">
    <source>
        <dbReference type="HGNC" id="HGNC:33601"/>
    </source>
</evidence>
<sequence length="302" mass="34809">MAATQELLLQLQKDNRDGRQRKQELEKLMRGLEAESESLNQRLQDLSERERSLLRRRSQAAQPLQGEAREAARERAERVRRRLEEAERHKEYLEQHSRQLQEQWEELSSQLFYYGGELQSQKSTEQQLAAQLVTLQNELELAETKCALQEEKLQQDALQTAEAWAIFQEQTVVLQEVQVKVMEAAEELDAWQSGRELCDGQLRGVQYSTESLMEEMARADRETRLFGGPRALAIRRCVLGALQVLLTLPLLFLGLSLLWTVLLDPGAVSAWLWSLTSETTLRRLRYTLSPLLELRANGLLPT</sequence>
<proteinExistence type="evidence at protein level"/>